<name>RNH2_CHRFK</name>
<reference key="1">
    <citation type="journal article" date="2006" name="Environ. Microbiol.">
        <title>Whole genome analysis of the marine Bacteroidetes'Gramella forsetii' reveals adaptations to degradation of polymeric organic matter.</title>
        <authorList>
            <person name="Bauer M."/>
            <person name="Kube M."/>
            <person name="Teeling H."/>
            <person name="Richter M."/>
            <person name="Lombardot T."/>
            <person name="Allers E."/>
            <person name="Wuerdemann C.A."/>
            <person name="Quast C."/>
            <person name="Kuhl H."/>
            <person name="Knaust F."/>
            <person name="Woebken D."/>
            <person name="Bischof K."/>
            <person name="Mussmann M."/>
            <person name="Choudhuri J.V."/>
            <person name="Meyer F."/>
            <person name="Reinhardt R."/>
            <person name="Amann R.I."/>
            <person name="Gloeckner F.O."/>
        </authorList>
    </citation>
    <scope>NUCLEOTIDE SEQUENCE [LARGE SCALE GENOMIC DNA]</scope>
    <source>
        <strain>DSM 17595 / CGMCC 1.15422 / KT0803</strain>
    </source>
</reference>
<sequence>MLNFYNTKITVAGADEAGRGCLAGPVTAAAVILPIEFKNAVLNDSKTLNLKNRNFLKSLIEDEAITYGVAHVFMKEIDEINILNASILAMHRALQVLKFDPDHIIVDGNRFKPYQKIPHECIIKGDGKYMSIAAASILAKTYRDEFMEKIHEEFPDYNWKKNKGYPTKEHRAAIKKYGVTKYHRKSFKLLPDQLKIDF</sequence>
<feature type="chain" id="PRO_0000334901" description="Ribonuclease HII">
    <location>
        <begin position="1"/>
        <end position="198"/>
    </location>
</feature>
<feature type="domain" description="RNase H type-2" evidence="2">
    <location>
        <begin position="9"/>
        <end position="198"/>
    </location>
</feature>
<feature type="binding site" evidence="1">
    <location>
        <position position="15"/>
    </location>
    <ligand>
        <name>a divalent metal cation</name>
        <dbReference type="ChEBI" id="CHEBI:60240"/>
    </ligand>
</feature>
<feature type="binding site" evidence="1">
    <location>
        <position position="16"/>
    </location>
    <ligand>
        <name>a divalent metal cation</name>
        <dbReference type="ChEBI" id="CHEBI:60240"/>
    </ligand>
</feature>
<feature type="binding site" evidence="1">
    <location>
        <position position="107"/>
    </location>
    <ligand>
        <name>a divalent metal cation</name>
        <dbReference type="ChEBI" id="CHEBI:60240"/>
    </ligand>
</feature>
<organism>
    <name type="scientific">Christiangramia forsetii (strain DSM 17595 / CGMCC 1.15422 / KT0803)</name>
    <name type="common">Gramella forsetii</name>
    <dbReference type="NCBI Taxonomy" id="411154"/>
    <lineage>
        <taxon>Bacteria</taxon>
        <taxon>Pseudomonadati</taxon>
        <taxon>Bacteroidota</taxon>
        <taxon>Flavobacteriia</taxon>
        <taxon>Flavobacteriales</taxon>
        <taxon>Flavobacteriaceae</taxon>
        <taxon>Christiangramia</taxon>
    </lineage>
</organism>
<comment type="function">
    <text evidence="1">Endonuclease that specifically degrades the RNA of RNA-DNA hybrids.</text>
</comment>
<comment type="catalytic activity">
    <reaction evidence="1">
        <text>Endonucleolytic cleavage to 5'-phosphomonoester.</text>
        <dbReference type="EC" id="3.1.26.4"/>
    </reaction>
</comment>
<comment type="cofactor">
    <cofactor evidence="1">
        <name>Mn(2+)</name>
        <dbReference type="ChEBI" id="CHEBI:29035"/>
    </cofactor>
    <cofactor evidence="1">
        <name>Mg(2+)</name>
        <dbReference type="ChEBI" id="CHEBI:18420"/>
    </cofactor>
    <text evidence="1">Manganese or magnesium. Binds 1 divalent metal ion per monomer in the absence of substrate. May bind a second metal ion after substrate binding.</text>
</comment>
<comment type="subcellular location">
    <subcellularLocation>
        <location evidence="1">Cytoplasm</location>
    </subcellularLocation>
</comment>
<comment type="similarity">
    <text evidence="1">Belongs to the RNase HII family.</text>
</comment>
<protein>
    <recommendedName>
        <fullName evidence="1">Ribonuclease HII</fullName>
        <shortName evidence="1">RNase HII</shortName>
        <ecNumber evidence="1">3.1.26.4</ecNumber>
    </recommendedName>
</protein>
<dbReference type="EC" id="3.1.26.4" evidence="1"/>
<dbReference type="EMBL" id="CU207366">
    <property type="protein sequence ID" value="CAL67870.1"/>
    <property type="molecule type" value="Genomic_DNA"/>
</dbReference>
<dbReference type="RefSeq" id="WP_011710771.1">
    <property type="nucleotide sequence ID" value="NC_008571.1"/>
</dbReference>
<dbReference type="SMR" id="A0M5H5"/>
<dbReference type="STRING" id="411154.GFO_2923"/>
<dbReference type="KEGG" id="gfo:GFO_2923"/>
<dbReference type="eggNOG" id="COG0164">
    <property type="taxonomic scope" value="Bacteria"/>
</dbReference>
<dbReference type="HOGENOM" id="CLU_036532_3_1_10"/>
<dbReference type="OrthoDB" id="9803420at2"/>
<dbReference type="Proteomes" id="UP000000755">
    <property type="component" value="Chromosome"/>
</dbReference>
<dbReference type="GO" id="GO:0005737">
    <property type="term" value="C:cytoplasm"/>
    <property type="evidence" value="ECO:0007669"/>
    <property type="project" value="UniProtKB-SubCell"/>
</dbReference>
<dbReference type="GO" id="GO:0032299">
    <property type="term" value="C:ribonuclease H2 complex"/>
    <property type="evidence" value="ECO:0007669"/>
    <property type="project" value="TreeGrafter"/>
</dbReference>
<dbReference type="GO" id="GO:0030145">
    <property type="term" value="F:manganese ion binding"/>
    <property type="evidence" value="ECO:0007669"/>
    <property type="project" value="UniProtKB-UniRule"/>
</dbReference>
<dbReference type="GO" id="GO:0003723">
    <property type="term" value="F:RNA binding"/>
    <property type="evidence" value="ECO:0007669"/>
    <property type="project" value="InterPro"/>
</dbReference>
<dbReference type="GO" id="GO:0004523">
    <property type="term" value="F:RNA-DNA hybrid ribonuclease activity"/>
    <property type="evidence" value="ECO:0007669"/>
    <property type="project" value="UniProtKB-UniRule"/>
</dbReference>
<dbReference type="GO" id="GO:0043137">
    <property type="term" value="P:DNA replication, removal of RNA primer"/>
    <property type="evidence" value="ECO:0007669"/>
    <property type="project" value="TreeGrafter"/>
</dbReference>
<dbReference type="GO" id="GO:0006298">
    <property type="term" value="P:mismatch repair"/>
    <property type="evidence" value="ECO:0007669"/>
    <property type="project" value="TreeGrafter"/>
</dbReference>
<dbReference type="CDD" id="cd07182">
    <property type="entry name" value="RNase_HII_bacteria_HII_like"/>
    <property type="match status" value="1"/>
</dbReference>
<dbReference type="Gene3D" id="3.30.420.10">
    <property type="entry name" value="Ribonuclease H-like superfamily/Ribonuclease H"/>
    <property type="match status" value="1"/>
</dbReference>
<dbReference type="HAMAP" id="MF_00052_B">
    <property type="entry name" value="RNase_HII_B"/>
    <property type="match status" value="1"/>
</dbReference>
<dbReference type="InterPro" id="IPR022898">
    <property type="entry name" value="RNase_HII"/>
</dbReference>
<dbReference type="InterPro" id="IPR001352">
    <property type="entry name" value="RNase_HII/HIII"/>
</dbReference>
<dbReference type="InterPro" id="IPR024567">
    <property type="entry name" value="RNase_HII/HIII_dom"/>
</dbReference>
<dbReference type="InterPro" id="IPR012337">
    <property type="entry name" value="RNaseH-like_sf"/>
</dbReference>
<dbReference type="InterPro" id="IPR036397">
    <property type="entry name" value="RNaseH_sf"/>
</dbReference>
<dbReference type="NCBIfam" id="NF000595">
    <property type="entry name" value="PRK00015.1-3"/>
    <property type="match status" value="1"/>
</dbReference>
<dbReference type="PANTHER" id="PTHR10954">
    <property type="entry name" value="RIBONUCLEASE H2 SUBUNIT A"/>
    <property type="match status" value="1"/>
</dbReference>
<dbReference type="PANTHER" id="PTHR10954:SF18">
    <property type="entry name" value="RIBONUCLEASE HII"/>
    <property type="match status" value="1"/>
</dbReference>
<dbReference type="Pfam" id="PF01351">
    <property type="entry name" value="RNase_HII"/>
    <property type="match status" value="1"/>
</dbReference>
<dbReference type="SUPFAM" id="SSF53098">
    <property type="entry name" value="Ribonuclease H-like"/>
    <property type="match status" value="1"/>
</dbReference>
<dbReference type="PROSITE" id="PS51975">
    <property type="entry name" value="RNASE_H_2"/>
    <property type="match status" value="1"/>
</dbReference>
<accession>A0M5H5</accession>
<gene>
    <name evidence="1" type="primary">rnhB</name>
    <name type="ordered locus">GFO_2923</name>
</gene>
<evidence type="ECO:0000255" key="1">
    <source>
        <dbReference type="HAMAP-Rule" id="MF_00052"/>
    </source>
</evidence>
<evidence type="ECO:0000255" key="2">
    <source>
        <dbReference type="PROSITE-ProRule" id="PRU01319"/>
    </source>
</evidence>
<keyword id="KW-0963">Cytoplasm</keyword>
<keyword id="KW-0255">Endonuclease</keyword>
<keyword id="KW-0378">Hydrolase</keyword>
<keyword id="KW-0464">Manganese</keyword>
<keyword id="KW-0479">Metal-binding</keyword>
<keyword id="KW-0540">Nuclease</keyword>
<proteinExistence type="inferred from homology"/>